<proteinExistence type="evidence at protein level"/>
<reference evidence="4" key="1">
    <citation type="journal article" date="2015" name="Toxicon">
        <title>A sleep-inducing peptide from the venom of the Indian cone snail Conus araneosus.</title>
        <authorList>
            <person name="Franklin J.B."/>
            <person name="Rajesh R.P."/>
        </authorList>
    </citation>
    <scope>PROTEIN SEQUENCE</scope>
    <scope>SUBCELLULAR LOCATION</scope>
    <scope>MASS SPECTROMETRY</scope>
    <scope>IDENTIFICATION BY MASS SPECTROMETRY</scope>
    <source>
        <tissue evidence="3">Venom</tissue>
    </source>
</reference>
<organism evidence="3">
    <name type="scientific">Conus araneosus</name>
    <name type="common">Cobweb cone</name>
    <dbReference type="NCBI Taxonomy" id="101286"/>
    <lineage>
        <taxon>Eukaryota</taxon>
        <taxon>Metazoa</taxon>
        <taxon>Spiralia</taxon>
        <taxon>Lophotrochozoa</taxon>
        <taxon>Mollusca</taxon>
        <taxon>Gastropoda</taxon>
        <taxon>Caenogastropoda</taxon>
        <taxon>Neogastropoda</taxon>
        <taxon>Conoidea</taxon>
        <taxon>Conidae</taxon>
        <taxon>Conus</taxon>
    </lineage>
</organism>
<accession>C0HKY3</accession>
<comment type="subcellular location">
    <subcellularLocation>
        <location evidence="2">Secreted</location>
    </subcellularLocation>
</comment>
<comment type="tissue specificity">
    <text evidence="5">Expressed by the venom duct.</text>
</comment>
<comment type="domain">
    <text evidence="3">The cysteine framework is X (CC-C-C).</text>
</comment>
<comment type="mass spectrometry"/>
<comment type="similarity">
    <text evidence="4">Belongs to the conotoxin T superfamily.</text>
</comment>
<protein>
    <recommendedName>
        <fullName evidence="3">Conotoxin ar5b</fullName>
    </recommendedName>
</protein>
<keyword id="KW-0903">Direct protein sequencing</keyword>
<keyword id="KW-1015">Disulfide bond</keyword>
<keyword id="KW-0964">Secreted</keyword>
<keyword id="KW-0800">Toxin</keyword>
<evidence type="ECO:0000250" key="1">
    <source>
        <dbReference type="UniProtKB" id="P0CI23"/>
    </source>
</evidence>
<evidence type="ECO:0000269" key="2">
    <source>
    </source>
</evidence>
<evidence type="ECO:0000303" key="3">
    <source>
    </source>
</evidence>
<evidence type="ECO:0000305" key="4"/>
<evidence type="ECO:0000305" key="5">
    <source>
    </source>
</evidence>
<feature type="peptide" id="PRO_0000441659" description="Conotoxin ar5b" evidence="2">
    <location>
        <begin position="1"/>
        <end position="11"/>
    </location>
</feature>
<feature type="disulfide bond" evidence="1">
    <location>
        <begin position="2"/>
        <end position="11"/>
    </location>
</feature>
<feature type="disulfide bond" evidence="1">
    <location>
        <begin position="3"/>
        <end position="8"/>
    </location>
</feature>
<feature type="unsure residue" description="I or L" evidence="3">
    <location>
        <position position="10"/>
    </location>
</feature>
<dbReference type="GO" id="GO:0005576">
    <property type="term" value="C:extracellular region"/>
    <property type="evidence" value="ECO:0000314"/>
    <property type="project" value="UniProtKB"/>
</dbReference>
<dbReference type="GO" id="GO:0090729">
    <property type="term" value="F:toxin activity"/>
    <property type="evidence" value="ECO:0007669"/>
    <property type="project" value="UniProtKB-KW"/>
</dbReference>
<sequence>RCCGYKFCYIC</sequence>
<name>CT10B_CONAO</name>